<name>YQZH_BACSU</name>
<keyword id="KW-1185">Reference proteome</keyword>
<gene>
    <name type="primary">yqzH</name>
    <name type="ordered locus">BSU23720</name>
</gene>
<dbReference type="EMBL" id="AL009126">
    <property type="protein sequence ID" value="CAB14304.1"/>
    <property type="molecule type" value="Genomic_DNA"/>
</dbReference>
<dbReference type="PIR" id="G69969">
    <property type="entry name" value="G69969"/>
</dbReference>
<dbReference type="RefSeq" id="NP_390253.1">
    <property type="nucleotide sequence ID" value="NC_000964.3"/>
</dbReference>
<dbReference type="RefSeq" id="WP_004398642.1">
    <property type="nucleotide sequence ID" value="NZ_OZ025638.1"/>
</dbReference>
<dbReference type="SMR" id="O32014"/>
<dbReference type="FunCoup" id="O32014">
    <property type="interactions" value="147"/>
</dbReference>
<dbReference type="STRING" id="224308.BSU23720"/>
<dbReference type="PaxDb" id="224308-BSU23720"/>
<dbReference type="EnsemblBacteria" id="CAB14304">
    <property type="protein sequence ID" value="CAB14304"/>
    <property type="gene ID" value="BSU_23720"/>
</dbReference>
<dbReference type="GeneID" id="938707"/>
<dbReference type="KEGG" id="bsu:BSU23720"/>
<dbReference type="PATRIC" id="fig|224308.179.peg.2585"/>
<dbReference type="InParanoid" id="O32014"/>
<dbReference type="OrthoDB" id="2937597at2"/>
<dbReference type="BioCyc" id="BSUB:BSU23720-MONOMER"/>
<dbReference type="Proteomes" id="UP000001570">
    <property type="component" value="Chromosome"/>
</dbReference>
<dbReference type="InterPro" id="IPR025546">
    <property type="entry name" value="YqzH"/>
</dbReference>
<dbReference type="Pfam" id="PF14164">
    <property type="entry name" value="YqzH"/>
    <property type="match status" value="1"/>
</dbReference>
<protein>
    <recommendedName>
        <fullName>Uncharacterized protein YqzH</fullName>
    </recommendedName>
</protein>
<proteinExistence type="predicted"/>
<feature type="chain" id="PRO_0000049853" description="Uncharacterized protein YqzH">
    <location>
        <begin position="1"/>
        <end position="68"/>
    </location>
</feature>
<organism>
    <name type="scientific">Bacillus subtilis (strain 168)</name>
    <dbReference type="NCBI Taxonomy" id="224308"/>
    <lineage>
        <taxon>Bacteria</taxon>
        <taxon>Bacillati</taxon>
        <taxon>Bacillota</taxon>
        <taxon>Bacilli</taxon>
        <taxon>Bacillales</taxon>
        <taxon>Bacillaceae</taxon>
        <taxon>Bacillus</taxon>
    </lineage>
</organism>
<reference key="1">
    <citation type="journal article" date="1997" name="Nature">
        <title>The complete genome sequence of the Gram-positive bacterium Bacillus subtilis.</title>
        <authorList>
            <person name="Kunst F."/>
            <person name="Ogasawara N."/>
            <person name="Moszer I."/>
            <person name="Albertini A.M."/>
            <person name="Alloni G."/>
            <person name="Azevedo V."/>
            <person name="Bertero M.G."/>
            <person name="Bessieres P."/>
            <person name="Bolotin A."/>
            <person name="Borchert S."/>
            <person name="Borriss R."/>
            <person name="Boursier L."/>
            <person name="Brans A."/>
            <person name="Braun M."/>
            <person name="Brignell S.C."/>
            <person name="Bron S."/>
            <person name="Brouillet S."/>
            <person name="Bruschi C.V."/>
            <person name="Caldwell B."/>
            <person name="Capuano V."/>
            <person name="Carter N.M."/>
            <person name="Choi S.-K."/>
            <person name="Codani J.-J."/>
            <person name="Connerton I.F."/>
            <person name="Cummings N.J."/>
            <person name="Daniel R.A."/>
            <person name="Denizot F."/>
            <person name="Devine K.M."/>
            <person name="Duesterhoeft A."/>
            <person name="Ehrlich S.D."/>
            <person name="Emmerson P.T."/>
            <person name="Entian K.-D."/>
            <person name="Errington J."/>
            <person name="Fabret C."/>
            <person name="Ferrari E."/>
            <person name="Foulger D."/>
            <person name="Fritz C."/>
            <person name="Fujita M."/>
            <person name="Fujita Y."/>
            <person name="Fuma S."/>
            <person name="Galizzi A."/>
            <person name="Galleron N."/>
            <person name="Ghim S.-Y."/>
            <person name="Glaser P."/>
            <person name="Goffeau A."/>
            <person name="Golightly E.J."/>
            <person name="Grandi G."/>
            <person name="Guiseppi G."/>
            <person name="Guy B.J."/>
            <person name="Haga K."/>
            <person name="Haiech J."/>
            <person name="Harwood C.R."/>
            <person name="Henaut A."/>
            <person name="Hilbert H."/>
            <person name="Holsappel S."/>
            <person name="Hosono S."/>
            <person name="Hullo M.-F."/>
            <person name="Itaya M."/>
            <person name="Jones L.-M."/>
            <person name="Joris B."/>
            <person name="Karamata D."/>
            <person name="Kasahara Y."/>
            <person name="Klaerr-Blanchard M."/>
            <person name="Klein C."/>
            <person name="Kobayashi Y."/>
            <person name="Koetter P."/>
            <person name="Koningstein G."/>
            <person name="Krogh S."/>
            <person name="Kumano M."/>
            <person name="Kurita K."/>
            <person name="Lapidus A."/>
            <person name="Lardinois S."/>
            <person name="Lauber J."/>
            <person name="Lazarevic V."/>
            <person name="Lee S.-M."/>
            <person name="Levine A."/>
            <person name="Liu H."/>
            <person name="Masuda S."/>
            <person name="Mauel C."/>
            <person name="Medigue C."/>
            <person name="Medina N."/>
            <person name="Mellado R.P."/>
            <person name="Mizuno M."/>
            <person name="Moestl D."/>
            <person name="Nakai S."/>
            <person name="Noback M."/>
            <person name="Noone D."/>
            <person name="O'Reilly M."/>
            <person name="Ogawa K."/>
            <person name="Ogiwara A."/>
            <person name="Oudega B."/>
            <person name="Park S.-H."/>
            <person name="Parro V."/>
            <person name="Pohl T.M."/>
            <person name="Portetelle D."/>
            <person name="Porwollik S."/>
            <person name="Prescott A.M."/>
            <person name="Presecan E."/>
            <person name="Pujic P."/>
            <person name="Purnelle B."/>
            <person name="Rapoport G."/>
            <person name="Rey M."/>
            <person name="Reynolds S."/>
            <person name="Rieger M."/>
            <person name="Rivolta C."/>
            <person name="Rocha E."/>
            <person name="Roche B."/>
            <person name="Rose M."/>
            <person name="Sadaie Y."/>
            <person name="Sato T."/>
            <person name="Scanlan E."/>
            <person name="Schleich S."/>
            <person name="Schroeter R."/>
            <person name="Scoffone F."/>
            <person name="Sekiguchi J."/>
            <person name="Sekowska A."/>
            <person name="Seror S.J."/>
            <person name="Serror P."/>
            <person name="Shin B.-S."/>
            <person name="Soldo B."/>
            <person name="Sorokin A."/>
            <person name="Tacconi E."/>
            <person name="Takagi T."/>
            <person name="Takahashi H."/>
            <person name="Takemaru K."/>
            <person name="Takeuchi M."/>
            <person name="Tamakoshi A."/>
            <person name="Tanaka T."/>
            <person name="Terpstra P."/>
            <person name="Tognoni A."/>
            <person name="Tosato V."/>
            <person name="Uchiyama S."/>
            <person name="Vandenbol M."/>
            <person name="Vannier F."/>
            <person name="Vassarotti A."/>
            <person name="Viari A."/>
            <person name="Wambutt R."/>
            <person name="Wedler E."/>
            <person name="Wedler H."/>
            <person name="Weitzenegger T."/>
            <person name="Winters P."/>
            <person name="Wipat A."/>
            <person name="Yamamoto H."/>
            <person name="Yamane K."/>
            <person name="Yasumoto K."/>
            <person name="Yata K."/>
            <person name="Yoshida K."/>
            <person name="Yoshikawa H.-F."/>
            <person name="Zumstein E."/>
            <person name="Yoshikawa H."/>
            <person name="Danchin A."/>
        </authorList>
    </citation>
    <scope>NUCLEOTIDE SEQUENCE [LARGE SCALE GENOMIC DNA]</scope>
    <source>
        <strain>168</strain>
    </source>
</reference>
<sequence length="68" mass="7953">MEKFVEKMLGQALRQYGRNVAIDPLSPYEKQSLKAALQERRNEEPDEDLHAHIEDIIYDYVTNQGLFS</sequence>
<accession>O32014</accession>